<comment type="function">
    <text evidence="1">Catalyzes the decarboxylation of S-adenosylmethionine to S-adenosylmethioninamine (dcAdoMet), the propylamine donor required for the synthesis of the polyamines spermine and spermidine from the diamine putrescine.</text>
</comment>
<comment type="catalytic activity">
    <reaction evidence="1">
        <text>S-adenosyl-L-methionine + H(+) = S-adenosyl 3-(methylsulfanyl)propylamine + CO2</text>
        <dbReference type="Rhea" id="RHEA:15981"/>
        <dbReference type="ChEBI" id="CHEBI:15378"/>
        <dbReference type="ChEBI" id="CHEBI:16526"/>
        <dbReference type="ChEBI" id="CHEBI:57443"/>
        <dbReference type="ChEBI" id="CHEBI:59789"/>
        <dbReference type="EC" id="4.1.1.50"/>
    </reaction>
</comment>
<comment type="cofactor">
    <cofactor evidence="1">
        <name>pyruvate</name>
        <dbReference type="ChEBI" id="CHEBI:15361"/>
    </cofactor>
    <text evidence="1">Binds 1 pyruvoyl group covalently per subunit.</text>
</comment>
<comment type="pathway">
    <text evidence="1">Amine and polyamine biosynthesis; S-adenosylmethioninamine biosynthesis; S-adenosylmethioninamine from S-adenosyl-L-methionine: step 1/1.</text>
</comment>
<comment type="subunit">
    <text evidence="1">Heterotetramer of two alpha and two beta chains arranged as a dimer of alpha/beta heterodimers.</text>
</comment>
<comment type="PTM">
    <text evidence="1">Is synthesized initially as an inactive proenzyme. Formation of the active enzyme involves a self-maturation process in which the active site pyruvoyl group is generated from an internal serine residue via an autocatalytic post-translational modification. Two non-identical subunits are generated from the proenzyme in this reaction, and the pyruvate is formed at the N-terminus of the alpha chain, which is derived from the carboxyl end of the proenzyme. The post-translation cleavage follows an unusual pathway, termed non-hydrolytic serinolysis, in which the side chain hydroxyl group of the serine supplies its oxygen atom to form the C-terminus of the beta chain, while the remainder of the serine residue undergoes an oxidative deamination to produce ammonia and the pyruvoyl group blocking the N-terminus of the alpha chain.</text>
</comment>
<comment type="similarity">
    <text evidence="1">Belongs to the prokaryotic AdoMetDC family. Type 1 subfamily.</text>
</comment>
<gene>
    <name evidence="1" type="primary">speH</name>
    <name type="ordered locus">LBL_4244</name>
</gene>
<feature type="chain" id="PRO_1000013674" description="S-adenosylmethionine decarboxylase beta chain" evidence="1">
    <location>
        <begin position="1"/>
        <end position="62"/>
    </location>
</feature>
<feature type="chain" id="PRO_0000315027" description="S-adenosylmethionine decarboxylase alpha chain" evidence="1">
    <location>
        <begin position="63"/>
        <end position="128"/>
    </location>
</feature>
<feature type="active site" description="Schiff-base intermediate with substrate; via pyruvic acid" evidence="1">
    <location>
        <position position="63"/>
    </location>
</feature>
<feature type="active site" description="Proton acceptor; for processing activity" evidence="1">
    <location>
        <position position="68"/>
    </location>
</feature>
<feature type="active site" description="Proton donor; for catalytic activity" evidence="1">
    <location>
        <position position="83"/>
    </location>
</feature>
<feature type="site" description="Cleavage (non-hydrolytic); by autolysis" evidence="1">
    <location>
        <begin position="62"/>
        <end position="63"/>
    </location>
</feature>
<feature type="modified residue" description="Pyruvic acid (Ser); by autocatalysis" evidence="1">
    <location>
        <position position="63"/>
    </location>
</feature>
<dbReference type="EC" id="4.1.1.50" evidence="1"/>
<dbReference type="EMBL" id="CP000349">
    <property type="protein sequence ID" value="ABJ80554.1"/>
    <property type="molecule type" value="Genomic_DNA"/>
</dbReference>
<dbReference type="SMR" id="Q04WJ1"/>
<dbReference type="KEGG" id="lbl:LBL_4244"/>
<dbReference type="HOGENOM" id="CLU_125470_2_3_12"/>
<dbReference type="UniPathway" id="UPA00331">
    <property type="reaction ID" value="UER00451"/>
</dbReference>
<dbReference type="GO" id="GO:0005829">
    <property type="term" value="C:cytosol"/>
    <property type="evidence" value="ECO:0007669"/>
    <property type="project" value="TreeGrafter"/>
</dbReference>
<dbReference type="GO" id="GO:0004014">
    <property type="term" value="F:adenosylmethionine decarboxylase activity"/>
    <property type="evidence" value="ECO:0007669"/>
    <property type="project" value="UniProtKB-UniRule"/>
</dbReference>
<dbReference type="GO" id="GO:0008295">
    <property type="term" value="P:spermidine biosynthetic process"/>
    <property type="evidence" value="ECO:0007669"/>
    <property type="project" value="UniProtKB-UniRule"/>
</dbReference>
<dbReference type="FunFam" id="3.30.160.750:FF:000004">
    <property type="entry name" value="S-adenosylmethionine decarboxylase proenzyme"/>
    <property type="match status" value="1"/>
</dbReference>
<dbReference type="FunFam" id="3.30.360.110:FF:000001">
    <property type="entry name" value="S-adenosylmethionine decarboxylase proenzyme"/>
    <property type="match status" value="1"/>
</dbReference>
<dbReference type="Gene3D" id="3.30.160.750">
    <property type="match status" value="1"/>
</dbReference>
<dbReference type="Gene3D" id="3.30.360.110">
    <property type="entry name" value="S-adenosylmethionine decarboxylase domain"/>
    <property type="match status" value="1"/>
</dbReference>
<dbReference type="HAMAP" id="MF_00464">
    <property type="entry name" value="AdoMetDC_1"/>
    <property type="match status" value="1"/>
</dbReference>
<dbReference type="InterPro" id="IPR042286">
    <property type="entry name" value="AdoMetDC_C"/>
</dbReference>
<dbReference type="InterPro" id="IPR003826">
    <property type="entry name" value="AdoMetDC_fam_prok"/>
</dbReference>
<dbReference type="InterPro" id="IPR042284">
    <property type="entry name" value="AdoMetDC_N"/>
</dbReference>
<dbReference type="InterPro" id="IPR016067">
    <property type="entry name" value="S-AdoMet_deCO2ase_core"/>
</dbReference>
<dbReference type="InterPro" id="IPR017716">
    <property type="entry name" value="S-AdoMet_deCOase_pro-enz"/>
</dbReference>
<dbReference type="NCBIfam" id="TIGR03330">
    <property type="entry name" value="SAM_DCase_Bsu"/>
    <property type="match status" value="1"/>
</dbReference>
<dbReference type="PANTHER" id="PTHR33866">
    <property type="entry name" value="S-ADENOSYLMETHIONINE DECARBOXYLASE PROENZYME"/>
    <property type="match status" value="1"/>
</dbReference>
<dbReference type="PANTHER" id="PTHR33866:SF2">
    <property type="entry name" value="S-ADENOSYLMETHIONINE DECARBOXYLASE PROENZYME"/>
    <property type="match status" value="1"/>
</dbReference>
<dbReference type="Pfam" id="PF02675">
    <property type="entry name" value="AdoMet_dc"/>
    <property type="match status" value="1"/>
</dbReference>
<dbReference type="SUPFAM" id="SSF56276">
    <property type="entry name" value="S-adenosylmethionine decarboxylase"/>
    <property type="match status" value="1"/>
</dbReference>
<name>SPEH_LEPBL</name>
<protein>
    <recommendedName>
        <fullName evidence="1">S-adenosylmethionine decarboxylase proenzyme</fullName>
        <shortName evidence="1">AdoMetDC</shortName>
        <shortName evidence="1">SAMDC</shortName>
        <ecNumber evidence="1">4.1.1.50</ecNumber>
    </recommendedName>
    <component>
        <recommendedName>
            <fullName evidence="1">S-adenosylmethionine decarboxylase beta chain</fullName>
        </recommendedName>
    </component>
    <component>
        <recommendedName>
            <fullName evidence="1">S-adenosylmethionine decarboxylase alpha chain</fullName>
        </recommendedName>
    </component>
</protein>
<evidence type="ECO:0000255" key="1">
    <source>
        <dbReference type="HAMAP-Rule" id="MF_00464"/>
    </source>
</evidence>
<sequence length="128" mass="14221">MNALGKHVIAEFYECDYETINNHELVEDIMLKSVDLSGATTIKSVFHRFSPYGVSGVVVVSESHFAIHTWPEYGYCAVDVFTCGDLIDNQAALDYLKEKFGSKNVSVVEMKRGVLNLGVDLHHKPVGN</sequence>
<organism>
    <name type="scientific">Leptospira borgpetersenii serovar Hardjo-bovis (strain L550)</name>
    <dbReference type="NCBI Taxonomy" id="355276"/>
    <lineage>
        <taxon>Bacteria</taxon>
        <taxon>Pseudomonadati</taxon>
        <taxon>Spirochaetota</taxon>
        <taxon>Spirochaetia</taxon>
        <taxon>Leptospirales</taxon>
        <taxon>Leptospiraceae</taxon>
        <taxon>Leptospira</taxon>
    </lineage>
</organism>
<proteinExistence type="inferred from homology"/>
<accession>Q04WJ1</accession>
<keyword id="KW-0068">Autocatalytic cleavage</keyword>
<keyword id="KW-0210">Decarboxylase</keyword>
<keyword id="KW-0456">Lyase</keyword>
<keyword id="KW-0620">Polyamine biosynthesis</keyword>
<keyword id="KW-0670">Pyruvate</keyword>
<keyword id="KW-0949">S-adenosyl-L-methionine</keyword>
<keyword id="KW-0704">Schiff base</keyword>
<keyword id="KW-0745">Spermidine biosynthesis</keyword>
<keyword id="KW-0865">Zymogen</keyword>
<reference key="1">
    <citation type="journal article" date="2006" name="Proc. Natl. Acad. Sci. U.S.A.">
        <title>Genome reduction in Leptospira borgpetersenii reflects limited transmission potential.</title>
        <authorList>
            <person name="Bulach D.M."/>
            <person name="Zuerner R.L."/>
            <person name="Wilson P."/>
            <person name="Seemann T."/>
            <person name="McGrath A."/>
            <person name="Cullen P.A."/>
            <person name="Davis J."/>
            <person name="Johnson M."/>
            <person name="Kuczek E."/>
            <person name="Alt D.P."/>
            <person name="Peterson-Burch B."/>
            <person name="Coppel R.L."/>
            <person name="Rood J.I."/>
            <person name="Davies J.K."/>
            <person name="Adler B."/>
        </authorList>
    </citation>
    <scope>NUCLEOTIDE SEQUENCE [LARGE SCALE GENOMIC DNA]</scope>
    <source>
        <strain>L550</strain>
    </source>
</reference>